<gene>
    <name evidence="4" type="primary">sacB</name>
    <name evidence="3" type="synonym">levU</name>
    <name evidence="7" type="ordered locus">Zmob_0914</name>
</gene>
<feature type="chain" id="PRO_0000414233" description="Levansucrase">
    <location>
        <begin position="1"/>
        <end position="423"/>
    </location>
</feature>
<feature type="active site" description="Nucleophile" evidence="1">
    <location>
        <position position="48"/>
    </location>
</feature>
<feature type="active site" description="Proton donor/acceptor" evidence="1">
    <location>
        <position position="278"/>
    </location>
</feature>
<feature type="binding site" evidence="1">
    <location>
        <position position="47"/>
    </location>
    <ligand>
        <name>sucrose</name>
        <dbReference type="ChEBI" id="CHEBI:17992"/>
    </ligand>
</feature>
<feature type="binding site" evidence="1">
    <location>
        <position position="48"/>
    </location>
    <ligand>
        <name>sucrose</name>
        <dbReference type="ChEBI" id="CHEBI:17992"/>
    </ligand>
</feature>
<feature type="binding site" evidence="1">
    <location>
        <position position="119"/>
    </location>
    <ligand>
        <name>sucrose</name>
        <dbReference type="ChEBI" id="CHEBI:17992"/>
    </ligand>
</feature>
<feature type="binding site" evidence="1">
    <location>
        <position position="193"/>
    </location>
    <ligand>
        <name>sucrose</name>
        <dbReference type="ChEBI" id="CHEBI:17992"/>
    </ligand>
</feature>
<feature type="binding site" evidence="1">
    <location>
        <position position="194"/>
    </location>
    <ligand>
        <name>sucrose</name>
        <dbReference type="ChEBI" id="CHEBI:17992"/>
    </ligand>
</feature>
<feature type="site" description="Transition state stabilizer" evidence="1">
    <location>
        <position position="194"/>
    </location>
</feature>
<feature type="sequence conflict" description="In Ref. 1; AAA27695." evidence="5" ref="1">
    <original>NPED</original>
    <variation>TPKI</variation>
    <location>
        <begin position="200"/>
        <end position="203"/>
    </location>
</feature>
<name>LSC_ZYMMA</name>
<reference key="1">
    <citation type="journal article" date="1993" name="Biochim. Biophys. Acta">
        <title>Nucleotide sequence of levansucrase gene (levU) of Zymomonas mobilis ZM1 (ATCC10988).</title>
        <authorList>
            <person name="Song K.B."/>
            <person name="Joo H.K."/>
            <person name="Rhee S.-K."/>
        </authorList>
    </citation>
    <scope>NUCLEOTIDE SEQUENCE [GENOMIC DNA]</scope>
    <source>
        <strain>ATCC 10988 / DSM 424 / CCUG 17860 / LMG 404 / NCIMB 8938 / NRRL B-806 / ZM1</strain>
    </source>
</reference>
<reference key="2">
    <citation type="journal article" date="1995" name="Biotechnol. Lett.">
        <title>The sacB and sacC genes encoding levansucrase and sucrase form a gene cluster in Zymomonas mobilis.</title>
        <authorList>
            <person name="Gunasekaran P."/>
            <person name="Mukundan G."/>
            <person name="Kannan R."/>
            <person name="Velmurugan S."/>
            <person name="Ait-Abdelkader N."/>
            <person name="Alvarez-Macarie E."/>
            <person name="Baratti J."/>
        </authorList>
    </citation>
    <scope>NUCLEOTIDE SEQUENCE [GENOMIC DNA]</scope>
    <scope>CATALYTIC ACTIVITY</scope>
    <scope>SUBCELLULAR LOCATION</scope>
    <source>
        <strain>ATCC 10988 / DSM 424 / CCUG 17860 / LMG 404 / NCIMB 8938 / NRRL B-806 / ZM1</strain>
    </source>
</reference>
<reference key="3">
    <citation type="journal article" date="2011" name="J. Bacteriol.">
        <title>Genome sequence of the ethanol-producing Zymomonas mobilis subsp. mobilis lectotype strain ATCC 10988.</title>
        <authorList>
            <person name="Pappas K.M."/>
            <person name="Kouvelis V.N."/>
            <person name="Saunders E."/>
            <person name="Brettin T.S."/>
            <person name="Bruce D."/>
            <person name="Detter C."/>
            <person name="Balakireva M."/>
            <person name="Han C.S."/>
            <person name="Savvakis G."/>
            <person name="Kyrpides N.C."/>
            <person name="Typas M.A."/>
        </authorList>
    </citation>
    <scope>NUCLEOTIDE SEQUENCE [LARGE SCALE GENOMIC DNA]</scope>
    <source>
        <strain>ATCC 10988 / DSM 424 / CCUG 17860 / LMG 404 / NCIMB 8938 / NRRL B-806 / ZM1</strain>
    </source>
</reference>
<dbReference type="EC" id="2.4.1.10" evidence="2"/>
<dbReference type="EMBL" id="AF081588">
    <property type="protein sequence ID" value="AAA27695.1"/>
    <property type="molecule type" value="Genomic_DNA"/>
</dbReference>
<dbReference type="EMBL" id="L33402">
    <property type="protein sequence ID" value="AAA27702.1"/>
    <property type="molecule type" value="Genomic_DNA"/>
</dbReference>
<dbReference type="EMBL" id="CP002850">
    <property type="protein sequence ID" value="AEH62749.1"/>
    <property type="molecule type" value="Genomic_DNA"/>
</dbReference>
<dbReference type="PIR" id="S33771">
    <property type="entry name" value="S33771"/>
</dbReference>
<dbReference type="RefSeq" id="WP_011240294.1">
    <property type="nucleotide sequence ID" value="NC_017262.1"/>
</dbReference>
<dbReference type="SMR" id="F8DT26"/>
<dbReference type="CAZy" id="GH68">
    <property type="family name" value="Glycoside Hydrolase Family 68"/>
</dbReference>
<dbReference type="GeneID" id="79904423"/>
<dbReference type="KEGG" id="zmm:Zmob_0914"/>
<dbReference type="eggNOG" id="COG1621">
    <property type="taxonomic scope" value="Bacteria"/>
</dbReference>
<dbReference type="HOGENOM" id="CLU_031862_1_0_5"/>
<dbReference type="OrthoDB" id="3359526at2"/>
<dbReference type="Proteomes" id="UP000001494">
    <property type="component" value="Chromosome"/>
</dbReference>
<dbReference type="GO" id="GO:0005576">
    <property type="term" value="C:extracellular region"/>
    <property type="evidence" value="ECO:0007669"/>
    <property type="project" value="UniProtKB-SubCell"/>
</dbReference>
<dbReference type="GO" id="GO:0050053">
    <property type="term" value="F:levansucrase activity"/>
    <property type="evidence" value="ECO:0007669"/>
    <property type="project" value="UniProtKB-EC"/>
</dbReference>
<dbReference type="GO" id="GO:0009758">
    <property type="term" value="P:carbohydrate utilization"/>
    <property type="evidence" value="ECO:0007669"/>
    <property type="project" value="InterPro"/>
</dbReference>
<dbReference type="CDD" id="cd08997">
    <property type="entry name" value="GH68"/>
    <property type="match status" value="1"/>
</dbReference>
<dbReference type="Gene3D" id="2.115.10.20">
    <property type="entry name" value="Glycosyl hydrolase domain, family 43"/>
    <property type="match status" value="1"/>
</dbReference>
<dbReference type="InterPro" id="IPR003469">
    <property type="entry name" value="Glyco_hydro_68"/>
</dbReference>
<dbReference type="InterPro" id="IPR023296">
    <property type="entry name" value="Glyco_hydro_beta-prop_sf"/>
</dbReference>
<dbReference type="Pfam" id="PF02435">
    <property type="entry name" value="Glyco_hydro_68"/>
    <property type="match status" value="1"/>
</dbReference>
<dbReference type="SUPFAM" id="SSF75005">
    <property type="entry name" value="Arabinanase/levansucrase/invertase"/>
    <property type="match status" value="1"/>
</dbReference>
<proteinExistence type="evidence at protein level"/>
<keyword id="KW-0119">Carbohydrate metabolism</keyword>
<keyword id="KW-0328">Glycosyltransferase</keyword>
<keyword id="KW-0964">Secreted</keyword>
<keyword id="KW-0808">Transferase</keyword>
<comment type="function">
    <text evidence="6">Catalyzes the synthesis of levan, a fructose polymer, by transferring the fructosyl moiety from sucrose to a growing acceptor molecule.</text>
</comment>
<comment type="catalytic activity">
    <reaction evidence="2">
        <text>[6)-beta-D-fructofuranosyl-(2-&gt;](n) alpha-D-glucopyranoside + sucrose = [6)-beta-D-fructofuranosyl-(2-&gt;](n+1) alpha-D-glucopyranoside + D-glucose</text>
        <dbReference type="Rhea" id="RHEA:13653"/>
        <dbReference type="Rhea" id="RHEA-COMP:13093"/>
        <dbReference type="Rhea" id="RHEA-COMP:13094"/>
        <dbReference type="ChEBI" id="CHEBI:4167"/>
        <dbReference type="ChEBI" id="CHEBI:17992"/>
        <dbReference type="ChEBI" id="CHEBI:134464"/>
        <dbReference type="EC" id="2.4.1.10"/>
    </reaction>
</comment>
<comment type="subcellular location">
    <subcellularLocation>
        <location evidence="6">Secreted</location>
    </subcellularLocation>
    <text evidence="2">Localizes in the cytoplasm when expressed in E.coli.</text>
</comment>
<comment type="similarity">
    <text evidence="5">Belongs to the glycosyl hydrolase 68 family.</text>
</comment>
<organism>
    <name type="scientific">Zymomonas mobilis subsp. mobilis (strain ATCC 10988 / DSM 424 / LMG 404 / NCIMB 8938 / NRRL B-806 / ZM1)</name>
    <dbReference type="NCBI Taxonomy" id="555217"/>
    <lineage>
        <taxon>Bacteria</taxon>
        <taxon>Pseudomonadati</taxon>
        <taxon>Pseudomonadota</taxon>
        <taxon>Alphaproteobacteria</taxon>
        <taxon>Sphingomonadales</taxon>
        <taxon>Zymomonadaceae</taxon>
        <taxon>Zymomonas</taxon>
    </lineage>
</organism>
<evidence type="ECO:0000250" key="1">
    <source>
        <dbReference type="UniProtKB" id="P05655"/>
    </source>
</evidence>
<evidence type="ECO:0000269" key="2">
    <source ref="2"/>
</evidence>
<evidence type="ECO:0000303" key="3">
    <source>
    </source>
</evidence>
<evidence type="ECO:0000303" key="4">
    <source ref="2"/>
</evidence>
<evidence type="ECO:0000305" key="5"/>
<evidence type="ECO:0000305" key="6">
    <source ref="2"/>
</evidence>
<evidence type="ECO:0000312" key="7">
    <source>
        <dbReference type="EMBL" id="AEH62749.1"/>
    </source>
</evidence>
<accession>F8DT26</accession>
<accession>Q06487</accession>
<accession>Q5NQK6</accession>
<accession>Q60114</accession>
<accession>Q60116</accession>
<sequence length="423" mass="46762">MLNKAGIAEPSLWTRADAMKVHTDDPTATMPTIDYDFPVMTDKYWVWDTWPLRDINGQVVSFQGWSVIFALVADRTKYGWHNRNDGARIGYFYSRGGSNWIFGGHLLKDGANPRSWEWSGCTIMAPGTANSVEVFFTSVNDTPSESVPAQCKGYIYADDKSVWFDGFDKVTDLFQADGLYYADYAENNFWDFRDPHVFINPEDGKTYALFEGNVAMERGTVAVGEEEIGPVPPKTETPDGARYCAAAIGIAQALNEARTEWKLLPPLVTAFGVNDQTERPHVVFQNGLTYLFTISHHSTYADGLSGPDGVYGFVSENGIFGPYEPLNGSGLVLGNPSSQPYQAYSHYVMTNGLVTSFIDTIPSSDPNVYRYGGTLAPTIKLELVGHRSFVTEVKGYGYIPPQIEWLAEDESSNSAAALSLLNK</sequence>
<protein>
    <recommendedName>
        <fullName evidence="3">Levansucrase</fullName>
        <ecNumber evidence="2">2.4.1.10</ecNumber>
    </recommendedName>
    <alternativeName>
        <fullName>Beta-D-fructofuranosyl transferase</fullName>
    </alternativeName>
    <alternativeName>
        <fullName>Sucrose 6-fructosyl transferase</fullName>
    </alternativeName>
</protein>